<keyword id="KW-0238">DNA-binding</keyword>
<keyword id="KW-0539">Nucleus</keyword>
<keyword id="KW-1185">Reference proteome</keyword>
<keyword id="KW-0804">Transcription</keyword>
<keyword id="KW-0805">Transcription regulation</keyword>
<evidence type="ECO:0000250" key="1"/>
<evidence type="ECO:0000255" key="2">
    <source>
        <dbReference type="PROSITE-ProRule" id="PRU00978"/>
    </source>
</evidence>
<evidence type="ECO:0000269" key="3">
    <source>
    </source>
</evidence>
<dbReference type="EMBL" id="AP005614">
    <property type="protein sequence ID" value="BAD19952.1"/>
    <property type="molecule type" value="Genomic_DNA"/>
</dbReference>
<dbReference type="EMBL" id="AP008208">
    <property type="protein sequence ID" value="BAF08343.1"/>
    <property type="molecule type" value="Genomic_DNA"/>
</dbReference>
<dbReference type="EMBL" id="AP014958">
    <property type="status" value="NOT_ANNOTATED_CDS"/>
    <property type="molecule type" value="Genomic_DNA"/>
</dbReference>
<dbReference type="RefSeq" id="XP_015622790.1">
    <property type="nucleotide sequence ID" value="XM_015767304.1"/>
</dbReference>
<dbReference type="SMR" id="Q6K3R9"/>
<dbReference type="FunCoup" id="Q6K3R9">
    <property type="interactions" value="13"/>
</dbReference>
<dbReference type="STRING" id="39947.Q6K3R9"/>
<dbReference type="PaxDb" id="39947-Q6K3R9"/>
<dbReference type="KEGG" id="dosa:Os02g0247100"/>
<dbReference type="InParanoid" id="Q6K3R9"/>
<dbReference type="OrthoDB" id="1435597at2759"/>
<dbReference type="Proteomes" id="UP000000763">
    <property type="component" value="Chromosome 2"/>
</dbReference>
<dbReference type="Proteomes" id="UP000059680">
    <property type="component" value="Chromosome 2"/>
</dbReference>
<dbReference type="GO" id="GO:0005634">
    <property type="term" value="C:nucleus"/>
    <property type="evidence" value="ECO:0000318"/>
    <property type="project" value="GO_Central"/>
</dbReference>
<dbReference type="GO" id="GO:0003677">
    <property type="term" value="F:DNA binding"/>
    <property type="evidence" value="ECO:0000318"/>
    <property type="project" value="GO_Central"/>
</dbReference>
<dbReference type="GO" id="GO:0003700">
    <property type="term" value="F:DNA-binding transcription factor activity"/>
    <property type="evidence" value="ECO:0007669"/>
    <property type="project" value="InterPro"/>
</dbReference>
<dbReference type="GO" id="GO:0045893">
    <property type="term" value="P:positive regulation of DNA-templated transcription"/>
    <property type="evidence" value="ECO:0000318"/>
    <property type="project" value="GO_Central"/>
</dbReference>
<dbReference type="CDD" id="cd14703">
    <property type="entry name" value="bZIP_plant_RF2"/>
    <property type="match status" value="1"/>
</dbReference>
<dbReference type="FunFam" id="1.20.5.170:FF:000057">
    <property type="entry name" value="Basic leucine zipper 61"/>
    <property type="match status" value="1"/>
</dbReference>
<dbReference type="Gene3D" id="1.20.5.170">
    <property type="match status" value="1"/>
</dbReference>
<dbReference type="InterPro" id="IPR004827">
    <property type="entry name" value="bZIP"/>
</dbReference>
<dbReference type="InterPro" id="IPR044759">
    <property type="entry name" value="bZIP_RF2"/>
</dbReference>
<dbReference type="InterPro" id="IPR046347">
    <property type="entry name" value="bZIP_sf"/>
</dbReference>
<dbReference type="InterPro" id="IPR052483">
    <property type="entry name" value="bZIP_transcription_regulators"/>
</dbReference>
<dbReference type="PANTHER" id="PTHR46391:SF3">
    <property type="entry name" value="BASIC LEUCINE ZIPPER 19"/>
    <property type="match status" value="1"/>
</dbReference>
<dbReference type="PANTHER" id="PTHR46391">
    <property type="entry name" value="BASIC LEUCINE ZIPPER 34"/>
    <property type="match status" value="1"/>
</dbReference>
<dbReference type="Pfam" id="PF00170">
    <property type="entry name" value="bZIP_1"/>
    <property type="match status" value="1"/>
</dbReference>
<dbReference type="SMART" id="SM00338">
    <property type="entry name" value="BRLZ"/>
    <property type="match status" value="1"/>
</dbReference>
<dbReference type="SUPFAM" id="SSF57959">
    <property type="entry name" value="Leucine zipper domain"/>
    <property type="match status" value="1"/>
</dbReference>
<dbReference type="PROSITE" id="PS50217">
    <property type="entry name" value="BZIP"/>
    <property type="match status" value="1"/>
</dbReference>
<dbReference type="PROSITE" id="PS00036">
    <property type="entry name" value="BZIP_BASIC"/>
    <property type="match status" value="1"/>
</dbReference>
<name>BZP19_ORYSJ</name>
<accession>Q6K3R9</accession>
<reference key="1">
    <citation type="journal article" date="2005" name="Nature">
        <title>The map-based sequence of the rice genome.</title>
        <authorList>
            <consortium name="International rice genome sequencing project (IRGSP)"/>
        </authorList>
    </citation>
    <scope>NUCLEOTIDE SEQUENCE [LARGE SCALE GENOMIC DNA]</scope>
    <source>
        <strain>cv. Nipponbare</strain>
    </source>
</reference>
<reference key="2">
    <citation type="journal article" date="2008" name="Nucleic Acids Res.">
        <title>The rice annotation project database (RAP-DB): 2008 update.</title>
        <authorList>
            <consortium name="The rice annotation project (RAP)"/>
        </authorList>
    </citation>
    <scope>GENOME REANNOTATION</scope>
    <source>
        <strain>cv. Nipponbare</strain>
    </source>
</reference>
<reference key="3">
    <citation type="journal article" date="2013" name="Rice">
        <title>Improvement of the Oryza sativa Nipponbare reference genome using next generation sequence and optical map data.</title>
        <authorList>
            <person name="Kawahara Y."/>
            <person name="de la Bastide M."/>
            <person name="Hamilton J.P."/>
            <person name="Kanamori H."/>
            <person name="McCombie W.R."/>
            <person name="Ouyang S."/>
            <person name="Schwartz D.C."/>
            <person name="Tanaka T."/>
            <person name="Wu J."/>
            <person name="Zhou S."/>
            <person name="Childs K.L."/>
            <person name="Davidson R.M."/>
            <person name="Lin H."/>
            <person name="Quesada-Ocampo L."/>
            <person name="Vaillancourt B."/>
            <person name="Sakai H."/>
            <person name="Lee S.S."/>
            <person name="Kim J."/>
            <person name="Numa H."/>
            <person name="Itoh T."/>
            <person name="Buell C.R."/>
            <person name="Matsumoto T."/>
        </authorList>
    </citation>
    <scope>GENOME REANNOTATION</scope>
    <source>
        <strain>cv. Nipponbare</strain>
    </source>
</reference>
<reference key="4">
    <citation type="journal article" date="2008" name="Plant Physiol.">
        <title>Genomic survey and gene expression analysis of the basic leucine zipper transcription factor family in rice.</title>
        <authorList>
            <person name="Nijhawan A."/>
            <person name="Jain M."/>
            <person name="Tyagi A.K."/>
            <person name="Khurana J.P."/>
        </authorList>
    </citation>
    <scope>TISSUE SPECIFICITY</scope>
    <scope>INDUCTION BY LIGHT</scope>
    <scope>GENE FAMILY</scope>
    <scope>NOMENCLATURE</scope>
</reference>
<proteinExistence type="evidence at transcript level"/>
<gene>
    <name type="primary">BZIP19</name>
    <name type="ordered locus">Os02g0247100</name>
    <name type="ordered locus">LOC_Os02g14910</name>
    <name type="ORF">OSJNBa0090H18.24</name>
</gene>
<organism>
    <name type="scientific">Oryza sativa subsp. japonica</name>
    <name type="common">Rice</name>
    <dbReference type="NCBI Taxonomy" id="39947"/>
    <lineage>
        <taxon>Eukaryota</taxon>
        <taxon>Viridiplantae</taxon>
        <taxon>Streptophyta</taxon>
        <taxon>Embryophyta</taxon>
        <taxon>Tracheophyta</taxon>
        <taxon>Spermatophyta</taxon>
        <taxon>Magnoliopsida</taxon>
        <taxon>Liliopsida</taxon>
        <taxon>Poales</taxon>
        <taxon>Poaceae</taxon>
        <taxon>BOP clade</taxon>
        <taxon>Oryzoideae</taxon>
        <taxon>Oryzeae</taxon>
        <taxon>Oryzinae</taxon>
        <taxon>Oryza</taxon>
        <taxon>Oryza sativa</taxon>
    </lineage>
</organism>
<comment type="function">
    <text evidence="1">Transcription regulator.</text>
</comment>
<comment type="subcellular location">
    <subcellularLocation>
        <location evidence="2">Nucleus</location>
    </subcellularLocation>
</comment>
<comment type="tissue specificity">
    <text evidence="3">Expressed in roots and shoots.</text>
</comment>
<comment type="induction">
    <text evidence="3">By white light.</text>
</comment>
<sequence length="269" mass="28176">MAQLPPRAPSAAAAAGQEWSAMAAAGEFLGFAAARRGAHRRSASDSAAFLMEAAVPMDDVIVGVGGGGEFDRLDDEQLMSMFSDVEAPAVSDGGGERGPAGEAHLMDMGDGDDGMGATSPAGAGAMAAAAAAAAADGIADPKRVKRILANRQSAQRSRVRKLQYISELERSVTTLQMEVSALSPRVAFLDHQRSLLTVGNSHLKQRIAALAQDKIFKDAHQEALKKEIERLRQVYHQQQIKATGGADIATAASMQAKHELLACEGAAMR</sequence>
<feature type="chain" id="PRO_0000430357" description="Basic leucine zipper 19">
    <location>
        <begin position="1"/>
        <end position="269"/>
    </location>
</feature>
<feature type="domain" description="bZIP" evidence="2">
    <location>
        <begin position="140"/>
        <end position="196"/>
    </location>
</feature>
<feature type="region of interest" description="Basic motif" evidence="2">
    <location>
        <begin position="142"/>
        <end position="161"/>
    </location>
</feature>
<feature type="region of interest" description="Leucine-zipper" evidence="2">
    <location>
        <begin position="168"/>
        <end position="196"/>
    </location>
</feature>
<protein>
    <recommendedName>
        <fullName>Basic leucine zipper 19</fullName>
        <shortName>OsbZIP19</shortName>
        <shortName>bZIP protein 19</shortName>
    </recommendedName>
</protein>